<keyword id="KW-1185">Reference proteome</keyword>
<keyword id="KW-0677">Repeat</keyword>
<protein>
    <recommendedName>
        <fullName>Late embryogenesis abundant protein, group 3</fullName>
        <shortName>LEA</shortName>
    </recommendedName>
</protein>
<proteinExistence type="evidence at transcript level"/>
<feature type="chain" id="PRO_0000221227" description="Late embryogenesis abundant protein, group 3">
    <location>
        <begin position="1"/>
        <end position="221"/>
    </location>
</feature>
<feature type="region of interest" description="Disordered" evidence="1">
    <location>
        <begin position="1"/>
        <end position="221"/>
    </location>
</feature>
<feature type="compositionally biased region" description="Basic and acidic residues" evidence="1">
    <location>
        <begin position="33"/>
        <end position="42"/>
    </location>
</feature>
<feature type="compositionally biased region" description="Low complexity" evidence="1">
    <location>
        <begin position="43"/>
        <end position="52"/>
    </location>
</feature>
<feature type="compositionally biased region" description="Basic and acidic residues" evidence="1">
    <location>
        <begin position="53"/>
        <end position="63"/>
    </location>
</feature>
<feature type="compositionally biased region" description="Basic and acidic residues" evidence="1">
    <location>
        <begin position="72"/>
        <end position="147"/>
    </location>
</feature>
<feature type="compositionally biased region" description="Polar residues" evidence="1">
    <location>
        <begin position="212"/>
        <end position="221"/>
    </location>
</feature>
<accession>Q42376</accession>
<organism>
    <name type="scientific">Zea mays</name>
    <name type="common">Maize</name>
    <dbReference type="NCBI Taxonomy" id="4577"/>
    <lineage>
        <taxon>Eukaryota</taxon>
        <taxon>Viridiplantae</taxon>
        <taxon>Streptophyta</taxon>
        <taxon>Embryophyta</taxon>
        <taxon>Tracheophyta</taxon>
        <taxon>Spermatophyta</taxon>
        <taxon>Magnoliopsida</taxon>
        <taxon>Liliopsida</taxon>
        <taxon>Poales</taxon>
        <taxon>Poaceae</taxon>
        <taxon>PACMAD clade</taxon>
        <taxon>Panicoideae</taxon>
        <taxon>Andropogonodae</taxon>
        <taxon>Andropogoneae</taxon>
        <taxon>Tripsacinae</taxon>
        <taxon>Zea</taxon>
    </lineage>
</organism>
<reference key="1">
    <citation type="journal article" date="1995" name="Plant Physiol.">
        <title>Sequence and regulation of a late embryogenesis abundant group 3 protein of maize.</title>
        <authorList>
            <person name="White C.N."/>
            <person name="Rivin C.J."/>
        </authorList>
    </citation>
    <scope>NUCLEOTIDE SEQUENCE [MRNA]</scope>
</reference>
<comment type="similarity">
    <text evidence="2">Belongs to the LEA type 4 family.</text>
</comment>
<name>LEA3_MAIZE</name>
<sequence>MASHQDKASYQAGETKARTEEKTGQAVGATKDTAQHAKDRAADAAGHAAGKGQDAKEATKQKASDTGSYLGKKTDEAKHKAGETTEATKHKAGETTEAAKQKAGETTEAAKQKAGETTETTKQKAGETTEAARQKAADAMEAAKQKAAEAGQYAKDTAVSGKDKSGGVIQQATEQVKSAAAGRKDAVMSTLGMGGDNKQGDANTNTNTNTTKDSSTITRDH</sequence>
<gene>
    <name type="primary">MGL3</name>
</gene>
<dbReference type="EMBL" id="U05226">
    <property type="protein sequence ID" value="AAA83402.1"/>
    <property type="molecule type" value="mRNA"/>
</dbReference>
<dbReference type="EMBL" id="D26552">
    <property type="protein sequence ID" value="BAA05550.1"/>
    <property type="molecule type" value="mRNA"/>
</dbReference>
<dbReference type="EMBL" id="Z29512">
    <property type="protein sequence ID" value="CAA82632.1"/>
    <property type="molecule type" value="mRNA"/>
</dbReference>
<dbReference type="PIR" id="S41387">
    <property type="entry name" value="S41387"/>
</dbReference>
<dbReference type="SMR" id="Q42376"/>
<dbReference type="FunCoup" id="Q42376">
    <property type="interactions" value="166"/>
</dbReference>
<dbReference type="STRING" id="4577.Q42376"/>
<dbReference type="InParanoid" id="Q42376"/>
<dbReference type="Proteomes" id="UP000007305">
    <property type="component" value="Unplaced"/>
</dbReference>
<dbReference type="ExpressionAtlas" id="Q42376">
    <property type="expression patterns" value="baseline and differential"/>
</dbReference>
<dbReference type="GO" id="GO:0005634">
    <property type="term" value="C:nucleus"/>
    <property type="evidence" value="ECO:0000318"/>
    <property type="project" value="GO_Central"/>
</dbReference>
<dbReference type="Gene3D" id="1.20.120.20">
    <property type="entry name" value="Apolipoprotein"/>
    <property type="match status" value="1"/>
</dbReference>
<dbReference type="PANTHER" id="PTHR47372">
    <property type="entry name" value="DAUER UP-REGULATED-RELATED"/>
    <property type="match status" value="1"/>
</dbReference>
<dbReference type="PANTHER" id="PTHR47372:SF11">
    <property type="entry name" value="RE19971P"/>
    <property type="match status" value="1"/>
</dbReference>
<dbReference type="SUPFAM" id="SSF58113">
    <property type="entry name" value="Apolipoprotein A-I"/>
    <property type="match status" value="1"/>
</dbReference>
<evidence type="ECO:0000256" key="1">
    <source>
        <dbReference type="SAM" id="MobiDB-lite"/>
    </source>
</evidence>
<evidence type="ECO:0000305" key="2"/>